<name>SMIP8_RAT</name>
<organism>
    <name type="scientific">Rattus norvegicus</name>
    <name type="common">Rat</name>
    <dbReference type="NCBI Taxonomy" id="10116"/>
    <lineage>
        <taxon>Eukaryota</taxon>
        <taxon>Metazoa</taxon>
        <taxon>Chordata</taxon>
        <taxon>Craniata</taxon>
        <taxon>Vertebrata</taxon>
        <taxon>Euteleostomi</taxon>
        <taxon>Mammalia</taxon>
        <taxon>Eutheria</taxon>
        <taxon>Euarchontoglires</taxon>
        <taxon>Glires</taxon>
        <taxon>Rodentia</taxon>
        <taxon>Myomorpha</taxon>
        <taxon>Muroidea</taxon>
        <taxon>Muridae</taxon>
        <taxon>Murinae</taxon>
        <taxon>Rattus</taxon>
    </lineage>
</organism>
<keyword id="KW-0966">Cell projection</keyword>
<keyword id="KW-0969">Cilium</keyword>
<keyword id="KW-0963">Cytoplasm</keyword>
<keyword id="KW-0206">Cytoskeleton</keyword>
<keyword id="KW-0282">Flagellum</keyword>
<keyword id="KW-1185">Reference proteome</keyword>
<reference key="1">
    <citation type="journal article" date="2004" name="Nature">
        <title>Genome sequence of the Brown Norway rat yields insights into mammalian evolution.</title>
        <authorList>
            <person name="Gibbs R.A."/>
            <person name="Weinstock G.M."/>
            <person name="Metzker M.L."/>
            <person name="Muzny D.M."/>
            <person name="Sodergren E.J."/>
            <person name="Scherer S."/>
            <person name="Scott G."/>
            <person name="Steffen D."/>
            <person name="Worley K.C."/>
            <person name="Burch P.E."/>
            <person name="Okwuonu G."/>
            <person name="Hines S."/>
            <person name="Lewis L."/>
            <person name="Deramo C."/>
            <person name="Delgado O."/>
            <person name="Dugan-Rocha S."/>
            <person name="Miner G."/>
            <person name="Morgan M."/>
            <person name="Hawes A."/>
            <person name="Gill R."/>
            <person name="Holt R.A."/>
            <person name="Adams M.D."/>
            <person name="Amanatides P.G."/>
            <person name="Baden-Tillson H."/>
            <person name="Barnstead M."/>
            <person name="Chin S."/>
            <person name="Evans C.A."/>
            <person name="Ferriera S."/>
            <person name="Fosler C."/>
            <person name="Glodek A."/>
            <person name="Gu Z."/>
            <person name="Jennings D."/>
            <person name="Kraft C.L."/>
            <person name="Nguyen T."/>
            <person name="Pfannkoch C.M."/>
            <person name="Sitter C."/>
            <person name="Sutton G.G."/>
            <person name="Venter J.C."/>
            <person name="Woodage T."/>
            <person name="Smith D."/>
            <person name="Lee H.-M."/>
            <person name="Gustafson E."/>
            <person name="Cahill P."/>
            <person name="Kana A."/>
            <person name="Doucette-Stamm L."/>
            <person name="Weinstock K."/>
            <person name="Fechtel K."/>
            <person name="Weiss R.B."/>
            <person name="Dunn D.M."/>
            <person name="Green E.D."/>
            <person name="Blakesley R.W."/>
            <person name="Bouffard G.G."/>
            <person name="De Jong P.J."/>
            <person name="Osoegawa K."/>
            <person name="Zhu B."/>
            <person name="Marra M."/>
            <person name="Schein J."/>
            <person name="Bosdet I."/>
            <person name="Fjell C."/>
            <person name="Jones S."/>
            <person name="Krzywinski M."/>
            <person name="Mathewson C."/>
            <person name="Siddiqui A."/>
            <person name="Wye N."/>
            <person name="McPherson J."/>
            <person name="Zhao S."/>
            <person name="Fraser C.M."/>
            <person name="Shetty J."/>
            <person name="Shatsman S."/>
            <person name="Geer K."/>
            <person name="Chen Y."/>
            <person name="Abramzon S."/>
            <person name="Nierman W.C."/>
            <person name="Havlak P.H."/>
            <person name="Chen R."/>
            <person name="Durbin K.J."/>
            <person name="Egan A."/>
            <person name="Ren Y."/>
            <person name="Song X.-Z."/>
            <person name="Li B."/>
            <person name="Liu Y."/>
            <person name="Qin X."/>
            <person name="Cawley S."/>
            <person name="Cooney A.J."/>
            <person name="D'Souza L.M."/>
            <person name="Martin K."/>
            <person name="Wu J.Q."/>
            <person name="Gonzalez-Garay M.L."/>
            <person name="Jackson A.R."/>
            <person name="Kalafus K.J."/>
            <person name="McLeod M.P."/>
            <person name="Milosavljevic A."/>
            <person name="Virk D."/>
            <person name="Volkov A."/>
            <person name="Wheeler D.A."/>
            <person name="Zhang Z."/>
            <person name="Bailey J.A."/>
            <person name="Eichler E.E."/>
            <person name="Tuzun E."/>
            <person name="Birney E."/>
            <person name="Mongin E."/>
            <person name="Ureta-Vidal A."/>
            <person name="Woodwark C."/>
            <person name="Zdobnov E."/>
            <person name="Bork P."/>
            <person name="Suyama M."/>
            <person name="Torrents D."/>
            <person name="Alexandersson M."/>
            <person name="Trask B.J."/>
            <person name="Young J.M."/>
            <person name="Huang H."/>
            <person name="Wang H."/>
            <person name="Xing H."/>
            <person name="Daniels S."/>
            <person name="Gietzen D."/>
            <person name="Schmidt J."/>
            <person name="Stevens K."/>
            <person name="Vitt U."/>
            <person name="Wingrove J."/>
            <person name="Camara F."/>
            <person name="Mar Alba M."/>
            <person name="Abril J.F."/>
            <person name="Guigo R."/>
            <person name="Smit A."/>
            <person name="Dubchak I."/>
            <person name="Rubin E.M."/>
            <person name="Couronne O."/>
            <person name="Poliakov A."/>
            <person name="Huebner N."/>
            <person name="Ganten D."/>
            <person name="Goesele C."/>
            <person name="Hummel O."/>
            <person name="Kreitler T."/>
            <person name="Lee Y.-A."/>
            <person name="Monti J."/>
            <person name="Schulz H."/>
            <person name="Zimdahl H."/>
            <person name="Himmelbauer H."/>
            <person name="Lehrach H."/>
            <person name="Jacob H.J."/>
            <person name="Bromberg S."/>
            <person name="Gullings-Handley J."/>
            <person name="Jensen-Seaman M.I."/>
            <person name="Kwitek A.E."/>
            <person name="Lazar J."/>
            <person name="Pasko D."/>
            <person name="Tonellato P.J."/>
            <person name="Twigger S."/>
            <person name="Ponting C.P."/>
            <person name="Duarte J.M."/>
            <person name="Rice S."/>
            <person name="Goodstadt L."/>
            <person name="Beatson S.A."/>
            <person name="Emes R.D."/>
            <person name="Winter E.E."/>
            <person name="Webber C."/>
            <person name="Brandt P."/>
            <person name="Nyakatura G."/>
            <person name="Adetobi M."/>
            <person name="Chiaromonte F."/>
            <person name="Elnitski L."/>
            <person name="Eswara P."/>
            <person name="Hardison R.C."/>
            <person name="Hou M."/>
            <person name="Kolbe D."/>
            <person name="Makova K."/>
            <person name="Miller W."/>
            <person name="Nekrutenko A."/>
            <person name="Riemer C."/>
            <person name="Schwartz S."/>
            <person name="Taylor J."/>
            <person name="Yang S."/>
            <person name="Zhang Y."/>
            <person name="Lindpaintner K."/>
            <person name="Andrews T.D."/>
            <person name="Caccamo M."/>
            <person name="Clamp M."/>
            <person name="Clarke L."/>
            <person name="Curwen V."/>
            <person name="Durbin R.M."/>
            <person name="Eyras E."/>
            <person name="Searle S.M."/>
            <person name="Cooper G.M."/>
            <person name="Batzoglou S."/>
            <person name="Brudno M."/>
            <person name="Sidow A."/>
            <person name="Stone E.A."/>
            <person name="Payseur B.A."/>
            <person name="Bourque G."/>
            <person name="Lopez-Otin C."/>
            <person name="Puente X.S."/>
            <person name="Chakrabarti K."/>
            <person name="Chatterji S."/>
            <person name="Dewey C."/>
            <person name="Pachter L."/>
            <person name="Bray N."/>
            <person name="Yap V.B."/>
            <person name="Caspi A."/>
            <person name="Tesler G."/>
            <person name="Pevzner P.A."/>
            <person name="Haussler D."/>
            <person name="Roskin K.M."/>
            <person name="Baertsch R."/>
            <person name="Clawson H."/>
            <person name="Furey T.S."/>
            <person name="Hinrichs A.S."/>
            <person name="Karolchik D."/>
            <person name="Kent W.J."/>
            <person name="Rosenbloom K.R."/>
            <person name="Trumbower H."/>
            <person name="Weirauch M."/>
            <person name="Cooper D.N."/>
            <person name="Stenson P.D."/>
            <person name="Ma B."/>
            <person name="Brent M."/>
            <person name="Arumugam M."/>
            <person name="Shteynberg D."/>
            <person name="Copley R.R."/>
            <person name="Taylor M.S."/>
            <person name="Riethman H."/>
            <person name="Mudunuri U."/>
            <person name="Peterson J."/>
            <person name="Guyer M."/>
            <person name="Felsenfeld A."/>
            <person name="Old S."/>
            <person name="Mockrin S."/>
            <person name="Collins F.S."/>
        </authorList>
    </citation>
    <scope>NUCLEOTIDE SEQUENCE [LARGE SCALE GENOMIC DNA]</scope>
    <source>
        <strain>Brown Norway</strain>
    </source>
</reference>
<reference key="2">
    <citation type="journal article" date="2003" name="Biochem. Biophys. Res. Commun.">
        <title>TEPP, a new gene specifically expressed in testis, prostate, and placenta and well conserved in chordates.</title>
        <authorList>
            <person name="Bera T.K."/>
            <person name="Hahn Y."/>
            <person name="Lee B."/>
            <person name="Pastan I.H."/>
        </authorList>
    </citation>
    <scope>IDENTIFICATION</scope>
</reference>
<sequence length="216" mass="25065">MARIIDLVPWDECSAHLYASPAILIPLERVRRPLAGVKHQLYHPGLPSLRRMDMDSVKGCLSDEHCQSSTYYTKDDFNEAHFTLLGVPNKPLHCLDFTATGQKLCHKYRDGKMIPIVPGIQRADWPCFTRAIEDWSQFVSKSGEFKLPCANRRVEGFSGYAVRYLKPELTQNWRYCLNQNPSLDRYGQKPLPFNTLNSFRRFGSHYSRINYLTPWH</sequence>
<gene>
    <name type="primary">Spmip8</name>
    <name type="synonym">Tepp</name>
</gene>
<dbReference type="EMBL" id="AABR03114133">
    <property type="status" value="NOT_ANNOTATED_CDS"/>
    <property type="molecule type" value="Genomic_DNA"/>
</dbReference>
<dbReference type="EMBL" id="BK001512">
    <property type="protein sequence ID" value="DAA01956.1"/>
    <property type="molecule type" value="mRNA"/>
</dbReference>
<dbReference type="RefSeq" id="NP_970617.1">
    <property type="nucleotide sequence ID" value="NM_201655.1"/>
</dbReference>
<dbReference type="SMR" id="Q6IMG9"/>
<dbReference type="FunCoup" id="Q6IMG9">
    <property type="interactions" value="51"/>
</dbReference>
<dbReference type="STRING" id="10116.ENSRNOP00000018082"/>
<dbReference type="PhosphoSitePlus" id="Q6IMG9"/>
<dbReference type="PaxDb" id="10116-ENSRNOP00000018082"/>
<dbReference type="Ensembl" id="ENSRNOT00000018082.4">
    <property type="protein sequence ID" value="ENSRNOP00000018082.3"/>
    <property type="gene ID" value="ENSRNOG00000013465.5"/>
</dbReference>
<dbReference type="GeneID" id="291850"/>
<dbReference type="KEGG" id="rno:291850"/>
<dbReference type="UCSC" id="RGD:735198">
    <property type="organism name" value="rat"/>
</dbReference>
<dbReference type="AGR" id="RGD:735198"/>
<dbReference type="CTD" id="374739"/>
<dbReference type="RGD" id="735198">
    <property type="gene designation" value="Spmip8"/>
</dbReference>
<dbReference type="eggNOG" id="ENOG502R4EY">
    <property type="taxonomic scope" value="Eukaryota"/>
</dbReference>
<dbReference type="GeneTree" id="ENSGT00390000013928"/>
<dbReference type="InParanoid" id="Q6IMG9"/>
<dbReference type="PhylomeDB" id="Q6IMG9"/>
<dbReference type="TreeFam" id="TF329060"/>
<dbReference type="PRO" id="PR:Q6IMG9"/>
<dbReference type="Proteomes" id="UP000002494">
    <property type="component" value="Chromosome 19"/>
</dbReference>
<dbReference type="Bgee" id="ENSRNOG00000013465">
    <property type="expression patterns" value="Expressed in testis and 19 other cell types or tissues"/>
</dbReference>
<dbReference type="GO" id="GO:0160111">
    <property type="term" value="C:axonemal A tubule inner sheath"/>
    <property type="evidence" value="ECO:0000266"/>
    <property type="project" value="RGD"/>
</dbReference>
<dbReference type="GO" id="GO:0036126">
    <property type="term" value="C:sperm flagellum"/>
    <property type="evidence" value="ECO:0000266"/>
    <property type="project" value="RGD"/>
</dbReference>
<dbReference type="GO" id="GO:0030317">
    <property type="term" value="P:flagellated sperm motility"/>
    <property type="evidence" value="ECO:0000266"/>
    <property type="project" value="RGD"/>
</dbReference>
<dbReference type="GO" id="GO:0019953">
    <property type="term" value="P:sexual reproduction"/>
    <property type="evidence" value="ECO:0000303"/>
    <property type="project" value="RGD"/>
</dbReference>
<dbReference type="InterPro" id="IPR034584">
    <property type="entry name" value="SPMIP8"/>
</dbReference>
<dbReference type="PANTHER" id="PTHR35348">
    <property type="entry name" value="TESTIS, PROSTATE AND PLACENTA-EXPRESSED PROTEIN"/>
    <property type="match status" value="1"/>
</dbReference>
<dbReference type="PANTHER" id="PTHR35348:SF1">
    <property type="entry name" value="TESTIS, PROSTATE AND PLACENTA-EXPRESSED PROTEIN"/>
    <property type="match status" value="1"/>
</dbReference>
<dbReference type="Pfam" id="PF22574">
    <property type="entry name" value="SPMIP8"/>
    <property type="match status" value="1"/>
</dbReference>
<proteinExistence type="evidence at transcript level"/>
<evidence type="ECO:0000250" key="1">
    <source>
        <dbReference type="UniProtKB" id="Q6IMH0"/>
    </source>
</evidence>
<feature type="chain" id="PRO_0000325779" description="Sperm microtubule inner protein 8">
    <location>
        <begin position="1"/>
        <end position="216"/>
    </location>
</feature>
<accession>Q6IMG9</accession>
<protein>
    <recommendedName>
        <fullName>Sperm microtubule inner protein 8</fullName>
    </recommendedName>
    <alternativeName>
        <fullName>Testis, prostate and placenta-expressed protein</fullName>
    </alternativeName>
</protein>
<comment type="function">
    <text evidence="1">Microtubule inner protein (MIP) part of the dynein-decorated doublet microtubules (DMTs) in flagellum axoneme. May serve to reinforce and thus stabilize the microtubule structure in the sperm flagella.</text>
</comment>
<comment type="subunit">
    <text evidence="1">Microtubule inner protein component of sperm flagellar doublet microtubules.</text>
</comment>
<comment type="subcellular location">
    <subcellularLocation>
        <location evidence="1">Cytoplasm</location>
        <location evidence="1">Cytoskeleton</location>
        <location evidence="1">Flagellum axoneme</location>
    </subcellularLocation>
    <text evidence="1">Localizes to the A-tubules of DMTs.</text>
</comment>